<protein>
    <recommendedName>
        <fullName evidence="1">Threonine--tRNA ligase</fullName>
        <ecNumber evidence="1">6.1.1.3</ecNumber>
    </recommendedName>
    <alternativeName>
        <fullName evidence="1">Threonyl-tRNA synthetase</fullName>
        <shortName evidence="1">ThrRS</shortName>
    </alternativeName>
</protein>
<feature type="chain" id="PRO_0000101106" description="Threonine--tRNA ligase">
    <location>
        <begin position="1"/>
        <end position="633"/>
    </location>
</feature>
<feature type="region of interest" description="Editing domain" evidence="1">
    <location>
        <begin position="1"/>
        <end position="143"/>
    </location>
</feature>
<feature type="region of interest" description="Catalytic" evidence="1">
    <location>
        <begin position="220"/>
        <end position="515"/>
    </location>
</feature>
<feature type="region of interest" description="Catalytic">
    <location>
        <begin position="221"/>
        <end position="515"/>
    </location>
</feature>
<feature type="binding site" evidence="1">
    <location>
        <position position="314"/>
    </location>
    <ligand>
        <name>Zn(2+)</name>
        <dbReference type="ChEBI" id="CHEBI:29105"/>
    </ligand>
</feature>
<feature type="binding site" evidence="1">
    <location>
        <position position="365"/>
    </location>
    <ligand>
        <name>Zn(2+)</name>
        <dbReference type="ChEBI" id="CHEBI:29105"/>
    </ligand>
</feature>
<feature type="binding site" evidence="1">
    <location>
        <position position="488"/>
    </location>
    <ligand>
        <name>Zn(2+)</name>
        <dbReference type="ChEBI" id="CHEBI:29105"/>
    </ligand>
</feature>
<reference key="1">
    <citation type="journal article" date="2003" name="Proc. Natl. Acad. Sci. U.S.A.">
        <title>The genome of Nanoarchaeum equitans: insights into early archaeal evolution and derived parasitism.</title>
        <authorList>
            <person name="Waters E."/>
            <person name="Hohn M.J."/>
            <person name="Ahel I."/>
            <person name="Graham D.E."/>
            <person name="Adams M.D."/>
            <person name="Barnstead M."/>
            <person name="Beeson K.Y."/>
            <person name="Bibbs L."/>
            <person name="Bolanos R."/>
            <person name="Keller M."/>
            <person name="Kretz K."/>
            <person name="Lin X."/>
            <person name="Mathur E."/>
            <person name="Ni J."/>
            <person name="Podar M."/>
            <person name="Richardson T."/>
            <person name="Sutton G.G."/>
            <person name="Simon M."/>
            <person name="Soell D."/>
            <person name="Stetter K.O."/>
            <person name="Short J.M."/>
            <person name="Noorderwier M."/>
        </authorList>
    </citation>
    <scope>NUCLEOTIDE SEQUENCE [LARGE SCALE GENOMIC DNA]</scope>
    <source>
        <strain>Kin4-M</strain>
    </source>
</reference>
<comment type="function">
    <text evidence="1">Catalyzes the attachment of threonine to tRNA(Thr) in a two-step reaction: L-threonine is first activated by ATP to form Thr-AMP and then transferred to the acceptor end of tRNA(Thr). Also edits incorrectly charged L-seryl-tRNA(Thr).</text>
</comment>
<comment type="catalytic activity">
    <reaction evidence="1">
        <text>tRNA(Thr) + L-threonine + ATP = L-threonyl-tRNA(Thr) + AMP + diphosphate + H(+)</text>
        <dbReference type="Rhea" id="RHEA:24624"/>
        <dbReference type="Rhea" id="RHEA-COMP:9670"/>
        <dbReference type="Rhea" id="RHEA-COMP:9704"/>
        <dbReference type="ChEBI" id="CHEBI:15378"/>
        <dbReference type="ChEBI" id="CHEBI:30616"/>
        <dbReference type="ChEBI" id="CHEBI:33019"/>
        <dbReference type="ChEBI" id="CHEBI:57926"/>
        <dbReference type="ChEBI" id="CHEBI:78442"/>
        <dbReference type="ChEBI" id="CHEBI:78534"/>
        <dbReference type="ChEBI" id="CHEBI:456215"/>
        <dbReference type="EC" id="6.1.1.3"/>
    </reaction>
</comment>
<comment type="cofactor">
    <cofactor evidence="1">
        <name>Zn(2+)</name>
        <dbReference type="ChEBI" id="CHEBI:29105"/>
    </cofactor>
    <text evidence="1">Binds 1 zinc ion per subunit.</text>
</comment>
<comment type="subunit">
    <text evidence="1">Homodimer.</text>
</comment>
<comment type="subcellular location">
    <subcellularLocation>
        <location evidence="1">Cytoplasm</location>
    </subcellularLocation>
</comment>
<comment type="domain">
    <text evidence="1">The N-terminal domain is an archaea-specific tRNA-editing domain that hydrolyzes incorrectly charged L-seryl-tRNA(Thr). Catalysis of tRNA editing is performed by the charged tRNA itself.</text>
</comment>
<comment type="similarity">
    <text evidence="1">Belongs to the class-II aminoacyl-tRNA synthetase family.</text>
</comment>
<dbReference type="EC" id="6.1.1.3" evidence="1"/>
<dbReference type="EMBL" id="AE017199">
    <property type="protein sequence ID" value="AAR39031.1"/>
    <property type="molecule type" value="Genomic_DNA"/>
</dbReference>
<dbReference type="SMR" id="Q74MP3"/>
<dbReference type="STRING" id="228908.NEQ177"/>
<dbReference type="EnsemblBacteria" id="AAR39031">
    <property type="protein sequence ID" value="AAR39031"/>
    <property type="gene ID" value="NEQ177"/>
</dbReference>
<dbReference type="KEGG" id="neq:NEQ177"/>
<dbReference type="PATRIC" id="fig|228908.8.peg.181"/>
<dbReference type="HOGENOM" id="CLU_029833_0_0_2"/>
<dbReference type="Proteomes" id="UP000000578">
    <property type="component" value="Chromosome"/>
</dbReference>
<dbReference type="GO" id="GO:0005737">
    <property type="term" value="C:cytoplasm"/>
    <property type="evidence" value="ECO:0007669"/>
    <property type="project" value="UniProtKB-SubCell"/>
</dbReference>
<dbReference type="GO" id="GO:0005524">
    <property type="term" value="F:ATP binding"/>
    <property type="evidence" value="ECO:0007669"/>
    <property type="project" value="UniProtKB-UniRule"/>
</dbReference>
<dbReference type="GO" id="GO:0004829">
    <property type="term" value="F:threonine-tRNA ligase activity"/>
    <property type="evidence" value="ECO:0007669"/>
    <property type="project" value="UniProtKB-UniRule"/>
</dbReference>
<dbReference type="GO" id="GO:0000049">
    <property type="term" value="F:tRNA binding"/>
    <property type="evidence" value="ECO:0007669"/>
    <property type="project" value="UniProtKB-KW"/>
</dbReference>
<dbReference type="GO" id="GO:0008270">
    <property type="term" value="F:zinc ion binding"/>
    <property type="evidence" value="ECO:0007669"/>
    <property type="project" value="InterPro"/>
</dbReference>
<dbReference type="GO" id="GO:0006435">
    <property type="term" value="P:threonyl-tRNA aminoacylation"/>
    <property type="evidence" value="ECO:0007669"/>
    <property type="project" value="UniProtKB-UniRule"/>
</dbReference>
<dbReference type="CDD" id="cd00860">
    <property type="entry name" value="ThrRS_anticodon"/>
    <property type="match status" value="1"/>
</dbReference>
<dbReference type="FunFam" id="3.40.50.800:FF:000001">
    <property type="entry name" value="Threonine--tRNA ligase"/>
    <property type="match status" value="1"/>
</dbReference>
<dbReference type="Gene3D" id="3.40.50.800">
    <property type="entry name" value="Anticodon-binding domain"/>
    <property type="match status" value="1"/>
</dbReference>
<dbReference type="Gene3D" id="3.30.930.10">
    <property type="entry name" value="Bira Bifunctional Protein, Domain 2"/>
    <property type="match status" value="1"/>
</dbReference>
<dbReference type="Gene3D" id="3.50.80.10">
    <property type="entry name" value="D-tyrosyl-tRNA(Tyr) deacylase"/>
    <property type="match status" value="1"/>
</dbReference>
<dbReference type="HAMAP" id="MF_00184">
    <property type="entry name" value="Thr_tRNA_synth"/>
    <property type="match status" value="1"/>
</dbReference>
<dbReference type="InterPro" id="IPR002314">
    <property type="entry name" value="aa-tRNA-synt_IIb"/>
</dbReference>
<dbReference type="InterPro" id="IPR006195">
    <property type="entry name" value="aa-tRNA-synth_II"/>
</dbReference>
<dbReference type="InterPro" id="IPR045864">
    <property type="entry name" value="aa-tRNA-synth_II/BPL/LPL"/>
</dbReference>
<dbReference type="InterPro" id="IPR004154">
    <property type="entry name" value="Anticodon-bd"/>
</dbReference>
<dbReference type="InterPro" id="IPR036621">
    <property type="entry name" value="Anticodon-bd_dom_sf"/>
</dbReference>
<dbReference type="InterPro" id="IPR023509">
    <property type="entry name" value="DTD-like_sf"/>
</dbReference>
<dbReference type="InterPro" id="IPR002320">
    <property type="entry name" value="Thr-tRNA-ligase_IIa"/>
</dbReference>
<dbReference type="InterPro" id="IPR015011">
    <property type="entry name" value="Threonyl-tRNA_syn_edit_dom_arc"/>
</dbReference>
<dbReference type="InterPro" id="IPR047246">
    <property type="entry name" value="ThrRS_anticodon"/>
</dbReference>
<dbReference type="NCBIfam" id="NF003068">
    <property type="entry name" value="PRK03991.1"/>
    <property type="match status" value="1"/>
</dbReference>
<dbReference type="PANTHER" id="PTHR11451:SF44">
    <property type="entry name" value="THREONINE--TRNA LIGASE, CHLOROPLASTIC_MITOCHONDRIAL 2"/>
    <property type="match status" value="1"/>
</dbReference>
<dbReference type="PANTHER" id="PTHR11451">
    <property type="entry name" value="THREONINE-TRNA LIGASE"/>
    <property type="match status" value="1"/>
</dbReference>
<dbReference type="Pfam" id="PF03129">
    <property type="entry name" value="HGTP_anticodon"/>
    <property type="match status" value="1"/>
</dbReference>
<dbReference type="Pfam" id="PF00587">
    <property type="entry name" value="tRNA-synt_2b"/>
    <property type="match status" value="1"/>
</dbReference>
<dbReference type="Pfam" id="PF08915">
    <property type="entry name" value="tRNA-Thr_ED"/>
    <property type="match status" value="1"/>
</dbReference>
<dbReference type="PRINTS" id="PR01047">
    <property type="entry name" value="TRNASYNTHTHR"/>
</dbReference>
<dbReference type="SUPFAM" id="SSF52954">
    <property type="entry name" value="Class II aaRS ABD-related"/>
    <property type="match status" value="1"/>
</dbReference>
<dbReference type="SUPFAM" id="SSF55681">
    <property type="entry name" value="Class II aaRS and biotin synthetases"/>
    <property type="match status" value="1"/>
</dbReference>
<dbReference type="PROSITE" id="PS50862">
    <property type="entry name" value="AA_TRNA_LIGASE_II"/>
    <property type="match status" value="1"/>
</dbReference>
<keyword id="KW-0030">Aminoacyl-tRNA synthetase</keyword>
<keyword id="KW-0067">ATP-binding</keyword>
<keyword id="KW-0963">Cytoplasm</keyword>
<keyword id="KW-0436">Ligase</keyword>
<keyword id="KW-0479">Metal-binding</keyword>
<keyword id="KW-0547">Nucleotide-binding</keyword>
<keyword id="KW-0648">Protein biosynthesis</keyword>
<keyword id="KW-1185">Reference proteome</keyword>
<keyword id="KW-0694">RNA-binding</keyword>
<keyword id="KW-0820">tRNA-binding</keyword>
<keyword id="KW-0862">Zinc</keyword>
<evidence type="ECO:0000255" key="1">
    <source>
        <dbReference type="HAMAP-Rule" id="MF_00184"/>
    </source>
</evidence>
<proteinExistence type="inferred from homology"/>
<name>SYT_NANEQ</name>
<accession>Q74MP3</accession>
<gene>
    <name evidence="1" type="primary">thrS</name>
    <name type="ordered locus">NEQ177</name>
</gene>
<sequence>MRALFLHSNRIKVIARQKALKEADQLEKPEFDVNKEHLAVFVAVEHGDNLSVAEQLVEEIKKVLEKIGIKEKVVVLYPYVHLTNNPSSPKLAKEVLDKAYDLLKSEGFEVYKAPFGWYKEFEIHVKGHPLAELSRTIKPKKVKKEEGNKVYLIYDGEKEYIIVGKKDKILVKDYKEIENKEKLHFELPKDGIELPIPINQDFEKMVLKEVFSEGEEIEKNPLNDVAKKFGFEWEPLSDYGHMRYKPYAALMVDLVNDYSIKIAKELPFPVFIVKGTNMFDLKQGPVAEHAKLFGERMYEVQSDKSVFVLRYAACFQQFAIAKDLTLSYKNVPFGMLEVADSYRFEQPGEVVLAFRLRKFYMPDLHVFTKDLDEAVEQFLNMHKKIMEEIKKIGRDYELLINVASFEDYEKYKYIIEQIYKDVKKPLLLAIYPKSDQRYWIINIEYHIIDVLGRPREIGTTQIDLHNSKRFGIKYIDKDGSEKHVIILHNAILGSIERYIYALFDTALRKEKPVLPFWISPVQVRVIPVSEKYLEYAEQIAKELESKFRVELDDRDETLNKKIKDAESLWVPYIIVIGEKEIKNNKITVRDRYENKVYETSLEDLISKMEELQKGYPFRPLYGPMKLSLKPANL</sequence>
<organism>
    <name type="scientific">Nanoarchaeum equitans (strain Kin4-M)</name>
    <dbReference type="NCBI Taxonomy" id="228908"/>
    <lineage>
        <taxon>Archaea</taxon>
        <taxon>Nanobdellota</taxon>
        <taxon>Candidatus Nanoarchaeia</taxon>
        <taxon>Nanoarchaeales</taxon>
        <taxon>Nanoarchaeaceae</taxon>
        <taxon>Nanoarchaeum</taxon>
    </lineage>
</organism>